<protein>
    <recommendedName>
        <fullName evidence="1">Large ribosomal subunit protein bL33</fullName>
    </recommendedName>
    <alternativeName>
        <fullName evidence="2">50S ribosomal protein L33</fullName>
    </alternativeName>
</protein>
<name>RL33_STRM5</name>
<sequence length="54" mass="6201">MAGKRDKVRMISTAGTGHFYTTDKNKKNTPGKMEFSKYDPVVRKHVPYKEGKIK</sequence>
<accession>B4SNM9</accession>
<keyword id="KW-0687">Ribonucleoprotein</keyword>
<keyword id="KW-0689">Ribosomal protein</keyword>
<feature type="chain" id="PRO_0000356704" description="Large ribosomal subunit protein bL33">
    <location>
        <begin position="1"/>
        <end position="54"/>
    </location>
</feature>
<comment type="similarity">
    <text evidence="1">Belongs to the bacterial ribosomal protein bL33 family.</text>
</comment>
<dbReference type="EMBL" id="CP001111">
    <property type="protein sequence ID" value="ACF53649.1"/>
    <property type="molecule type" value="Genomic_DNA"/>
</dbReference>
<dbReference type="SMR" id="B4SNM9"/>
<dbReference type="STRING" id="391008.Smal_3950"/>
<dbReference type="KEGG" id="smt:Smal_3950"/>
<dbReference type="eggNOG" id="COG0267">
    <property type="taxonomic scope" value="Bacteria"/>
</dbReference>
<dbReference type="HOGENOM" id="CLU_190949_1_1_6"/>
<dbReference type="OrthoDB" id="21586at2"/>
<dbReference type="Proteomes" id="UP000001867">
    <property type="component" value="Chromosome"/>
</dbReference>
<dbReference type="GO" id="GO:0022625">
    <property type="term" value="C:cytosolic large ribosomal subunit"/>
    <property type="evidence" value="ECO:0007669"/>
    <property type="project" value="TreeGrafter"/>
</dbReference>
<dbReference type="GO" id="GO:0003735">
    <property type="term" value="F:structural constituent of ribosome"/>
    <property type="evidence" value="ECO:0007669"/>
    <property type="project" value="InterPro"/>
</dbReference>
<dbReference type="GO" id="GO:0006412">
    <property type="term" value="P:translation"/>
    <property type="evidence" value="ECO:0007669"/>
    <property type="project" value="UniProtKB-UniRule"/>
</dbReference>
<dbReference type="FunFam" id="2.20.28.120:FF:000001">
    <property type="entry name" value="50S ribosomal protein L33"/>
    <property type="match status" value="1"/>
</dbReference>
<dbReference type="Gene3D" id="2.20.28.120">
    <property type="entry name" value="Ribosomal protein L33"/>
    <property type="match status" value="1"/>
</dbReference>
<dbReference type="HAMAP" id="MF_00294">
    <property type="entry name" value="Ribosomal_bL33"/>
    <property type="match status" value="1"/>
</dbReference>
<dbReference type="InterPro" id="IPR001705">
    <property type="entry name" value="Ribosomal_bL33"/>
</dbReference>
<dbReference type="InterPro" id="IPR018264">
    <property type="entry name" value="Ribosomal_bL33_CS"/>
</dbReference>
<dbReference type="InterPro" id="IPR038584">
    <property type="entry name" value="Ribosomal_bL33_sf"/>
</dbReference>
<dbReference type="InterPro" id="IPR011332">
    <property type="entry name" value="Ribosomal_zn-bd"/>
</dbReference>
<dbReference type="NCBIfam" id="NF001860">
    <property type="entry name" value="PRK00595.1"/>
    <property type="match status" value="1"/>
</dbReference>
<dbReference type="NCBIfam" id="TIGR01023">
    <property type="entry name" value="rpmG_bact"/>
    <property type="match status" value="1"/>
</dbReference>
<dbReference type="PANTHER" id="PTHR15238">
    <property type="entry name" value="54S RIBOSOMAL PROTEIN L39, MITOCHONDRIAL"/>
    <property type="match status" value="1"/>
</dbReference>
<dbReference type="PANTHER" id="PTHR15238:SF1">
    <property type="entry name" value="LARGE RIBOSOMAL SUBUNIT PROTEIN BL33M"/>
    <property type="match status" value="1"/>
</dbReference>
<dbReference type="Pfam" id="PF00471">
    <property type="entry name" value="Ribosomal_L33"/>
    <property type="match status" value="1"/>
</dbReference>
<dbReference type="SUPFAM" id="SSF57829">
    <property type="entry name" value="Zn-binding ribosomal proteins"/>
    <property type="match status" value="1"/>
</dbReference>
<dbReference type="PROSITE" id="PS00582">
    <property type="entry name" value="RIBOSOMAL_L33"/>
    <property type="match status" value="1"/>
</dbReference>
<reference key="1">
    <citation type="submission" date="2008-06" db="EMBL/GenBank/DDBJ databases">
        <title>Complete sequence of Stenotrophomonas maltophilia R551-3.</title>
        <authorList>
            <consortium name="US DOE Joint Genome Institute"/>
            <person name="Lucas S."/>
            <person name="Copeland A."/>
            <person name="Lapidus A."/>
            <person name="Glavina del Rio T."/>
            <person name="Dalin E."/>
            <person name="Tice H."/>
            <person name="Pitluck S."/>
            <person name="Chain P."/>
            <person name="Malfatti S."/>
            <person name="Shin M."/>
            <person name="Vergez L."/>
            <person name="Lang D."/>
            <person name="Schmutz J."/>
            <person name="Larimer F."/>
            <person name="Land M."/>
            <person name="Hauser L."/>
            <person name="Kyrpides N."/>
            <person name="Mikhailova N."/>
            <person name="Taghavi S."/>
            <person name="Monchy S."/>
            <person name="Newman L."/>
            <person name="Vangronsveld J."/>
            <person name="van der Lelie D."/>
            <person name="Richardson P."/>
        </authorList>
    </citation>
    <scope>NUCLEOTIDE SEQUENCE [LARGE SCALE GENOMIC DNA]</scope>
    <source>
        <strain>R551-3</strain>
    </source>
</reference>
<gene>
    <name evidence="1" type="primary">rpmG</name>
    <name type="ordered locus">Smal_3950</name>
</gene>
<organism>
    <name type="scientific">Stenotrophomonas maltophilia (strain R551-3)</name>
    <dbReference type="NCBI Taxonomy" id="391008"/>
    <lineage>
        <taxon>Bacteria</taxon>
        <taxon>Pseudomonadati</taxon>
        <taxon>Pseudomonadota</taxon>
        <taxon>Gammaproteobacteria</taxon>
        <taxon>Lysobacterales</taxon>
        <taxon>Lysobacteraceae</taxon>
        <taxon>Stenotrophomonas</taxon>
        <taxon>Stenotrophomonas maltophilia group</taxon>
    </lineage>
</organism>
<evidence type="ECO:0000255" key="1">
    <source>
        <dbReference type="HAMAP-Rule" id="MF_00294"/>
    </source>
</evidence>
<evidence type="ECO:0000305" key="2"/>
<proteinExistence type="inferred from homology"/>